<protein>
    <recommendedName>
        <fullName evidence="4">Small ribosomal subunit protein eS17B</fullName>
    </recommendedName>
    <alternativeName>
        <fullName>40S ribosomal protein S17-B</fullName>
    </alternativeName>
</protein>
<name>RS17B_SCHPO</name>
<evidence type="ECO:0000250" key="1">
    <source>
        <dbReference type="UniProtKB" id="P14127"/>
    </source>
</evidence>
<evidence type="ECO:0000269" key="2">
    <source>
    </source>
</evidence>
<evidence type="ECO:0000269" key="3">
    <source>
    </source>
</evidence>
<evidence type="ECO:0000305" key="4"/>
<keyword id="KW-0963">Cytoplasm</keyword>
<keyword id="KW-0597">Phosphoprotein</keyword>
<keyword id="KW-1185">Reference proteome</keyword>
<keyword id="KW-0687">Ribonucleoprotein</keyword>
<keyword id="KW-0689">Ribosomal protein</keyword>
<comment type="function">
    <text evidence="1">Component of the ribosome, a large ribonucleoprotein complex responsible for the synthesis of proteins in the cell. The small ribosomal subunit (SSU) binds messenger RNAs (mRNAs) and translates the encoded message by selecting cognate aminoacyl-transfer RNA (tRNA) molecules. The large subunit (LSU) contains the ribosomal catalytic site termed the peptidyl transferase center (PTC), which catalyzes the formation of peptide bonds, thereby polymerizing the amino acids delivered by tRNAs into a polypeptide chain. The nascent polypeptides leave the ribosome through a tunnel in the LSU and interact with protein factors that function in enzymatic processing, targeting, and the membrane insertion of nascent chains at the exit of the ribosomal tunnel.</text>
</comment>
<comment type="subunit">
    <text evidence="1">Component of the small ribosomal subunit (SSU). Mature yeast ribosomes consist of a small (40S) and a large (60S) subunit. The 40S small subunit contains 1 molecule of ribosomal RNA (18S rRNA) and at least 33 different proteins. The large 60S subunit contains 3 rRNA molecules (25S, 5.8S and 5S rRNA) and at least 46 different proteins.</text>
</comment>
<comment type="subcellular location">
    <subcellularLocation>
        <location evidence="2">Cytoplasm</location>
    </subcellularLocation>
</comment>
<comment type="miscellaneous">
    <text>There are 2 genes for eS17 in S.pombe.</text>
</comment>
<comment type="similarity">
    <text evidence="4">Belongs to the eukaryotic ribosomal protein eS17 family.</text>
</comment>
<sequence length="132" mass="15534">MGRVRTKTTKRASRVVIEKYYPRLTLDFQTNKRIVDEVAIIASKRLRNKIAGYTTHLMKRIQRGPVRGISFKLQEEERERKDQYVPEVSELEKDKINVDQDTKDMLKALGYDSIPTVVVAASRPERPFRYRH</sequence>
<dbReference type="EMBL" id="CU329672">
    <property type="protein sequence ID" value="CAB76218.1"/>
    <property type="molecule type" value="Genomic_DNA"/>
</dbReference>
<dbReference type="PIR" id="T50416">
    <property type="entry name" value="T50416"/>
</dbReference>
<dbReference type="RefSeq" id="NP_588012.1">
    <property type="nucleotide sequence ID" value="NM_001023003.2"/>
</dbReference>
<dbReference type="SMR" id="Q9P7J6"/>
<dbReference type="BioGRID" id="275897">
    <property type="interactions" value="36"/>
</dbReference>
<dbReference type="FunCoup" id="Q9P7J6">
    <property type="interactions" value="506"/>
</dbReference>
<dbReference type="STRING" id="284812.Q9P7J6"/>
<dbReference type="iPTMnet" id="Q9P7J6"/>
<dbReference type="PaxDb" id="4896-SPCC24B10.09.1"/>
<dbReference type="EnsemblFungi" id="SPCC24B10.09.1">
    <property type="protein sequence ID" value="SPCC24B10.09.1:pep"/>
    <property type="gene ID" value="SPCC24B10.09"/>
</dbReference>
<dbReference type="GeneID" id="2539331"/>
<dbReference type="KEGG" id="spo:2539331"/>
<dbReference type="PomBase" id="SPCC24B10.09">
    <property type="gene designation" value="rps1702"/>
</dbReference>
<dbReference type="VEuPathDB" id="FungiDB:SPCC24B10.09"/>
<dbReference type="eggNOG" id="KOG0187">
    <property type="taxonomic scope" value="Eukaryota"/>
</dbReference>
<dbReference type="HOGENOM" id="CLU_112958_0_1_1"/>
<dbReference type="InParanoid" id="Q9P7J6"/>
<dbReference type="OMA" id="HTEHIEV"/>
<dbReference type="PhylomeDB" id="Q9P7J6"/>
<dbReference type="Reactome" id="R-SPO-156827">
    <property type="pathway name" value="L13a-mediated translational silencing of Ceruloplasmin expression"/>
</dbReference>
<dbReference type="Reactome" id="R-SPO-1799339">
    <property type="pathway name" value="SRP-dependent cotranslational protein targeting to membrane"/>
</dbReference>
<dbReference type="Reactome" id="R-SPO-72649">
    <property type="pathway name" value="Translation initiation complex formation"/>
</dbReference>
<dbReference type="Reactome" id="R-SPO-72689">
    <property type="pathway name" value="Formation of a pool of free 40S subunits"/>
</dbReference>
<dbReference type="Reactome" id="R-SPO-72695">
    <property type="pathway name" value="Formation of the ternary complex, and subsequently, the 43S complex"/>
</dbReference>
<dbReference type="Reactome" id="R-SPO-72702">
    <property type="pathway name" value="Ribosomal scanning and start codon recognition"/>
</dbReference>
<dbReference type="Reactome" id="R-SPO-72706">
    <property type="pathway name" value="GTP hydrolysis and joining of the 60S ribosomal subunit"/>
</dbReference>
<dbReference type="Reactome" id="R-SPO-975956">
    <property type="pathway name" value="Nonsense Mediated Decay (NMD) independent of the Exon Junction Complex (EJC)"/>
</dbReference>
<dbReference type="Reactome" id="R-SPO-975957">
    <property type="pathway name" value="Nonsense Mediated Decay (NMD) enhanced by the Exon Junction Complex (EJC)"/>
</dbReference>
<dbReference type="PRO" id="PR:Q9P7J6"/>
<dbReference type="Proteomes" id="UP000002485">
    <property type="component" value="Chromosome III"/>
</dbReference>
<dbReference type="GO" id="GO:0005829">
    <property type="term" value="C:cytosol"/>
    <property type="evidence" value="ECO:0007005"/>
    <property type="project" value="PomBase"/>
</dbReference>
<dbReference type="GO" id="GO:0022627">
    <property type="term" value="C:cytosolic small ribosomal subunit"/>
    <property type="evidence" value="ECO:0000266"/>
    <property type="project" value="PomBase"/>
</dbReference>
<dbReference type="GO" id="GO:0003735">
    <property type="term" value="F:structural constituent of ribosome"/>
    <property type="evidence" value="ECO:0000266"/>
    <property type="project" value="PomBase"/>
</dbReference>
<dbReference type="GO" id="GO:0002182">
    <property type="term" value="P:cytoplasmic translational elongation"/>
    <property type="evidence" value="ECO:0000303"/>
    <property type="project" value="PomBase"/>
</dbReference>
<dbReference type="GO" id="GO:0042254">
    <property type="term" value="P:ribosome biogenesis"/>
    <property type="evidence" value="ECO:0000266"/>
    <property type="project" value="PomBase"/>
</dbReference>
<dbReference type="FunFam" id="1.10.60.20:FF:000001">
    <property type="entry name" value="40S ribosomal protein S17"/>
    <property type="match status" value="1"/>
</dbReference>
<dbReference type="Gene3D" id="1.10.60.20">
    <property type="entry name" value="Ribosomal protein S17e-like"/>
    <property type="match status" value="1"/>
</dbReference>
<dbReference type="HAMAP" id="MF_00511">
    <property type="entry name" value="Ribosomal_eS17"/>
    <property type="match status" value="1"/>
</dbReference>
<dbReference type="InterPro" id="IPR001210">
    <property type="entry name" value="Ribosomal_eS17"/>
</dbReference>
<dbReference type="InterPro" id="IPR018273">
    <property type="entry name" value="Ribosomal_eS17_CS"/>
</dbReference>
<dbReference type="InterPro" id="IPR036401">
    <property type="entry name" value="Ribosomal_eS17_sf"/>
</dbReference>
<dbReference type="NCBIfam" id="NF002242">
    <property type="entry name" value="PRK01151.1"/>
    <property type="match status" value="1"/>
</dbReference>
<dbReference type="PANTHER" id="PTHR10732">
    <property type="entry name" value="40S RIBOSOMAL PROTEIN S17"/>
    <property type="match status" value="1"/>
</dbReference>
<dbReference type="PANTHER" id="PTHR10732:SF0">
    <property type="entry name" value="40S RIBOSOMAL PROTEIN S17"/>
    <property type="match status" value="1"/>
</dbReference>
<dbReference type="Pfam" id="PF00833">
    <property type="entry name" value="Ribosomal_S17e"/>
    <property type="match status" value="1"/>
</dbReference>
<dbReference type="SUPFAM" id="SSF116820">
    <property type="entry name" value="Rps17e-like"/>
    <property type="match status" value="1"/>
</dbReference>
<dbReference type="PROSITE" id="PS00712">
    <property type="entry name" value="RIBOSOMAL_S17E"/>
    <property type="match status" value="1"/>
</dbReference>
<organism>
    <name type="scientific">Schizosaccharomyces pombe (strain 972 / ATCC 24843)</name>
    <name type="common">Fission yeast</name>
    <dbReference type="NCBI Taxonomy" id="284812"/>
    <lineage>
        <taxon>Eukaryota</taxon>
        <taxon>Fungi</taxon>
        <taxon>Dikarya</taxon>
        <taxon>Ascomycota</taxon>
        <taxon>Taphrinomycotina</taxon>
        <taxon>Schizosaccharomycetes</taxon>
        <taxon>Schizosaccharomycetales</taxon>
        <taxon>Schizosaccharomycetaceae</taxon>
        <taxon>Schizosaccharomyces</taxon>
    </lineage>
</organism>
<reference key="1">
    <citation type="journal article" date="2002" name="Nature">
        <title>The genome sequence of Schizosaccharomyces pombe.</title>
        <authorList>
            <person name="Wood V."/>
            <person name="Gwilliam R."/>
            <person name="Rajandream M.A."/>
            <person name="Lyne M.H."/>
            <person name="Lyne R."/>
            <person name="Stewart A."/>
            <person name="Sgouros J.G."/>
            <person name="Peat N."/>
            <person name="Hayles J."/>
            <person name="Baker S.G."/>
            <person name="Basham D."/>
            <person name="Bowman S."/>
            <person name="Brooks K."/>
            <person name="Brown D."/>
            <person name="Brown S."/>
            <person name="Chillingworth T."/>
            <person name="Churcher C.M."/>
            <person name="Collins M."/>
            <person name="Connor R."/>
            <person name="Cronin A."/>
            <person name="Davis P."/>
            <person name="Feltwell T."/>
            <person name="Fraser A."/>
            <person name="Gentles S."/>
            <person name="Goble A."/>
            <person name="Hamlin N."/>
            <person name="Harris D.E."/>
            <person name="Hidalgo J."/>
            <person name="Hodgson G."/>
            <person name="Holroyd S."/>
            <person name="Hornsby T."/>
            <person name="Howarth S."/>
            <person name="Huckle E.J."/>
            <person name="Hunt S."/>
            <person name="Jagels K."/>
            <person name="James K.D."/>
            <person name="Jones L."/>
            <person name="Jones M."/>
            <person name="Leather S."/>
            <person name="McDonald S."/>
            <person name="McLean J."/>
            <person name="Mooney P."/>
            <person name="Moule S."/>
            <person name="Mungall K.L."/>
            <person name="Murphy L.D."/>
            <person name="Niblett D."/>
            <person name="Odell C."/>
            <person name="Oliver K."/>
            <person name="O'Neil S."/>
            <person name="Pearson D."/>
            <person name="Quail M.A."/>
            <person name="Rabbinowitsch E."/>
            <person name="Rutherford K.M."/>
            <person name="Rutter S."/>
            <person name="Saunders D."/>
            <person name="Seeger K."/>
            <person name="Sharp S."/>
            <person name="Skelton J."/>
            <person name="Simmonds M.N."/>
            <person name="Squares R."/>
            <person name="Squares S."/>
            <person name="Stevens K."/>
            <person name="Taylor K."/>
            <person name="Taylor R.G."/>
            <person name="Tivey A."/>
            <person name="Walsh S.V."/>
            <person name="Warren T."/>
            <person name="Whitehead S."/>
            <person name="Woodward J.R."/>
            <person name="Volckaert G."/>
            <person name="Aert R."/>
            <person name="Robben J."/>
            <person name="Grymonprez B."/>
            <person name="Weltjens I."/>
            <person name="Vanstreels E."/>
            <person name="Rieger M."/>
            <person name="Schaefer M."/>
            <person name="Mueller-Auer S."/>
            <person name="Gabel C."/>
            <person name="Fuchs M."/>
            <person name="Duesterhoeft A."/>
            <person name="Fritzc C."/>
            <person name="Holzer E."/>
            <person name="Moestl D."/>
            <person name="Hilbert H."/>
            <person name="Borzym K."/>
            <person name="Langer I."/>
            <person name="Beck A."/>
            <person name="Lehrach H."/>
            <person name="Reinhardt R."/>
            <person name="Pohl T.M."/>
            <person name="Eger P."/>
            <person name="Zimmermann W."/>
            <person name="Wedler H."/>
            <person name="Wambutt R."/>
            <person name="Purnelle B."/>
            <person name="Goffeau A."/>
            <person name="Cadieu E."/>
            <person name="Dreano S."/>
            <person name="Gloux S."/>
            <person name="Lelaure V."/>
            <person name="Mottier S."/>
            <person name="Galibert F."/>
            <person name="Aves S.J."/>
            <person name="Xiang Z."/>
            <person name="Hunt C."/>
            <person name="Moore K."/>
            <person name="Hurst S.M."/>
            <person name="Lucas M."/>
            <person name="Rochet M."/>
            <person name="Gaillardin C."/>
            <person name="Tallada V.A."/>
            <person name="Garzon A."/>
            <person name="Thode G."/>
            <person name="Daga R.R."/>
            <person name="Cruzado L."/>
            <person name="Jimenez J."/>
            <person name="Sanchez M."/>
            <person name="del Rey F."/>
            <person name="Benito J."/>
            <person name="Dominguez A."/>
            <person name="Revuelta J.L."/>
            <person name="Moreno S."/>
            <person name="Armstrong J."/>
            <person name="Forsburg S.L."/>
            <person name="Cerutti L."/>
            <person name="Lowe T."/>
            <person name="McCombie W.R."/>
            <person name="Paulsen I."/>
            <person name="Potashkin J."/>
            <person name="Shpakovski G.V."/>
            <person name="Ussery D."/>
            <person name="Barrell B.G."/>
            <person name="Nurse P."/>
        </authorList>
    </citation>
    <scope>NUCLEOTIDE SEQUENCE [LARGE SCALE GENOMIC DNA]</scope>
    <source>
        <strain>972 / ATCC 24843</strain>
    </source>
</reference>
<reference key="2">
    <citation type="journal article" date="2006" name="Nat. Biotechnol.">
        <title>ORFeome cloning and global analysis of protein localization in the fission yeast Schizosaccharomyces pombe.</title>
        <authorList>
            <person name="Matsuyama A."/>
            <person name="Arai R."/>
            <person name="Yashiroda Y."/>
            <person name="Shirai A."/>
            <person name="Kamata A."/>
            <person name="Sekido S."/>
            <person name="Kobayashi Y."/>
            <person name="Hashimoto A."/>
            <person name="Hamamoto M."/>
            <person name="Hiraoka Y."/>
            <person name="Horinouchi S."/>
            <person name="Yoshida M."/>
        </authorList>
    </citation>
    <scope>SUBCELLULAR LOCATION [LARGE SCALE ANALYSIS]</scope>
</reference>
<reference key="3">
    <citation type="journal article" date="2008" name="J. Proteome Res.">
        <title>Phosphoproteome analysis of fission yeast.</title>
        <authorList>
            <person name="Wilson-Grady J.T."/>
            <person name="Villen J."/>
            <person name="Gygi S.P."/>
        </authorList>
    </citation>
    <scope>PHOSPHORYLATION [LARGE SCALE ANALYSIS] AT SER-43</scope>
    <scope>IDENTIFICATION BY MASS SPECTROMETRY</scope>
</reference>
<accession>Q9P7J6</accession>
<feature type="chain" id="PRO_0000141545" description="Small ribosomal subunit protein eS17B">
    <location>
        <begin position="1"/>
        <end position="132"/>
    </location>
</feature>
<feature type="modified residue" description="Phosphoserine" evidence="3">
    <location>
        <position position="43"/>
    </location>
</feature>
<gene>
    <name type="primary">rps1702</name>
    <name type="synonym">rps17b</name>
    <name type="ORF">SPCC24B10.09</name>
</gene>
<proteinExistence type="evidence at protein level"/>